<accession>Q88YY0</accession>
<accession>F9UL74</accession>
<protein>
    <recommendedName>
        <fullName evidence="1">Glutamate--tRNA ligase</fullName>
        <ecNumber evidence="1">6.1.1.17</ecNumber>
    </recommendedName>
    <alternativeName>
        <fullName evidence="1">Glutamyl-tRNA synthetase</fullName>
        <shortName evidence="1">GluRS</shortName>
    </alternativeName>
</protein>
<gene>
    <name evidence="1" type="primary">gltX</name>
    <name type="ordered locus">lp_0609</name>
</gene>
<reference key="1">
    <citation type="journal article" date="2003" name="Proc. Natl. Acad. Sci. U.S.A.">
        <title>Complete genome sequence of Lactobacillus plantarum WCFS1.</title>
        <authorList>
            <person name="Kleerebezem M."/>
            <person name="Boekhorst J."/>
            <person name="van Kranenburg R."/>
            <person name="Molenaar D."/>
            <person name="Kuipers O.P."/>
            <person name="Leer R."/>
            <person name="Tarchini R."/>
            <person name="Peters S.A."/>
            <person name="Sandbrink H.M."/>
            <person name="Fiers M.W.E.J."/>
            <person name="Stiekema W."/>
            <person name="Klein Lankhorst R.M."/>
            <person name="Bron P.A."/>
            <person name="Hoffer S.M."/>
            <person name="Nierop Groot M.N."/>
            <person name="Kerkhoven R."/>
            <person name="De Vries M."/>
            <person name="Ursing B."/>
            <person name="De Vos W.M."/>
            <person name="Siezen R.J."/>
        </authorList>
    </citation>
    <scope>NUCLEOTIDE SEQUENCE [LARGE SCALE GENOMIC DNA]</scope>
    <source>
        <strain>ATCC BAA-793 / NCIMB 8826 / WCFS1</strain>
    </source>
</reference>
<reference key="2">
    <citation type="journal article" date="2012" name="J. Bacteriol.">
        <title>Complete resequencing and reannotation of the Lactobacillus plantarum WCFS1 genome.</title>
        <authorList>
            <person name="Siezen R.J."/>
            <person name="Francke C."/>
            <person name="Renckens B."/>
            <person name="Boekhorst J."/>
            <person name="Wels M."/>
            <person name="Kleerebezem M."/>
            <person name="van Hijum S.A."/>
        </authorList>
    </citation>
    <scope>NUCLEOTIDE SEQUENCE [LARGE SCALE GENOMIC DNA]</scope>
    <scope>GENOME REANNOTATION</scope>
    <source>
        <strain>ATCC BAA-793 / NCIMB 8826 / WCFS1</strain>
    </source>
</reference>
<proteinExistence type="inferred from homology"/>
<evidence type="ECO:0000255" key="1">
    <source>
        <dbReference type="HAMAP-Rule" id="MF_00022"/>
    </source>
</evidence>
<feature type="chain" id="PRO_0000119585" description="Glutamate--tRNA ligase">
    <location>
        <begin position="1"/>
        <end position="496"/>
    </location>
</feature>
<feature type="short sequence motif" description="'HIGH' region" evidence="1">
    <location>
        <begin position="12"/>
        <end position="22"/>
    </location>
</feature>
<feature type="short sequence motif" description="'KMSKS' region" evidence="1">
    <location>
        <begin position="259"/>
        <end position="263"/>
    </location>
</feature>
<feature type="binding site" evidence="1">
    <location>
        <position position="262"/>
    </location>
    <ligand>
        <name>ATP</name>
        <dbReference type="ChEBI" id="CHEBI:30616"/>
    </ligand>
</feature>
<comment type="function">
    <text evidence="1">Catalyzes the attachment of glutamate to tRNA(Glu) in a two-step reaction: glutamate is first activated by ATP to form Glu-AMP and then transferred to the acceptor end of tRNA(Glu).</text>
</comment>
<comment type="catalytic activity">
    <reaction evidence="1">
        <text>tRNA(Glu) + L-glutamate + ATP = L-glutamyl-tRNA(Glu) + AMP + diphosphate</text>
        <dbReference type="Rhea" id="RHEA:23540"/>
        <dbReference type="Rhea" id="RHEA-COMP:9663"/>
        <dbReference type="Rhea" id="RHEA-COMP:9680"/>
        <dbReference type="ChEBI" id="CHEBI:29985"/>
        <dbReference type="ChEBI" id="CHEBI:30616"/>
        <dbReference type="ChEBI" id="CHEBI:33019"/>
        <dbReference type="ChEBI" id="CHEBI:78442"/>
        <dbReference type="ChEBI" id="CHEBI:78520"/>
        <dbReference type="ChEBI" id="CHEBI:456215"/>
        <dbReference type="EC" id="6.1.1.17"/>
    </reaction>
</comment>
<comment type="subunit">
    <text evidence="1">Monomer.</text>
</comment>
<comment type="subcellular location">
    <subcellularLocation>
        <location evidence="1">Cytoplasm</location>
    </subcellularLocation>
</comment>
<comment type="similarity">
    <text evidence="1">Belongs to the class-I aminoacyl-tRNA synthetase family. Glutamate--tRNA ligase type 1 subfamily.</text>
</comment>
<keyword id="KW-0030">Aminoacyl-tRNA synthetase</keyword>
<keyword id="KW-0067">ATP-binding</keyword>
<keyword id="KW-0963">Cytoplasm</keyword>
<keyword id="KW-0436">Ligase</keyword>
<keyword id="KW-0547">Nucleotide-binding</keyword>
<keyword id="KW-0648">Protein biosynthesis</keyword>
<keyword id="KW-1185">Reference proteome</keyword>
<sequence>MAKSKIRVRYAPSPTGHLHIGNARTALFNYLFARHNKGKFILRIEDTDLKRNVKDGEKSQMDNLTWLGIDWDEGPDKGGDFGPYRQSERKSIYDPLIQQLIDEGKAYESYMTEDELSAQREAQKARKEMPHYVYEFAGMTEDEKQAKIAAAKAAGIQPVIRFHVPENTTYAWDDMVKGKVSFESKTVGGDFVIKKRDGMPTYNFAVVVDDHMMEISHVFRGDDHVANTPKQLMIYEAFGWQPPKFGHMSLIINTETGKKLSKRDETVLQFIEQYRELGYLPEAMLNFIILLGWSPVGESELFSKREFIKMYDEKRLSKSPAAFDGKKLEWVNNQYIKKADENEVFAMSIRQLIKAGRLPQRPDMSQIEWTRTLVSLFKNQMSYTGQIVDLADLFFNGPADINDEAKAELDNDTALPVLKEFRQRIEDIDVFEATAIQKTIKSIQKDTKIKGRALYMPIRIAVSHEMHGPELPETIELLGRETTKKHLDAMIAELAK</sequence>
<name>SYE_LACPL</name>
<organism>
    <name type="scientific">Lactiplantibacillus plantarum (strain ATCC BAA-793 / NCIMB 8826 / WCFS1)</name>
    <name type="common">Lactobacillus plantarum</name>
    <dbReference type="NCBI Taxonomy" id="220668"/>
    <lineage>
        <taxon>Bacteria</taxon>
        <taxon>Bacillati</taxon>
        <taxon>Bacillota</taxon>
        <taxon>Bacilli</taxon>
        <taxon>Lactobacillales</taxon>
        <taxon>Lactobacillaceae</taxon>
        <taxon>Lactiplantibacillus</taxon>
    </lineage>
</organism>
<dbReference type="EC" id="6.1.1.17" evidence="1"/>
<dbReference type="EMBL" id="AL935263">
    <property type="protein sequence ID" value="CCC78089.1"/>
    <property type="molecule type" value="Genomic_DNA"/>
</dbReference>
<dbReference type="RefSeq" id="WP_003640932.1">
    <property type="nucleotide sequence ID" value="NC_004567.2"/>
</dbReference>
<dbReference type="RefSeq" id="YP_004888603.1">
    <property type="nucleotide sequence ID" value="NC_004567.2"/>
</dbReference>
<dbReference type="SMR" id="Q88YY0"/>
<dbReference type="STRING" id="220668.lp_0609"/>
<dbReference type="EnsemblBacteria" id="CCC78089">
    <property type="protein sequence ID" value="CCC78089"/>
    <property type="gene ID" value="lp_0609"/>
</dbReference>
<dbReference type="GeneID" id="89668250"/>
<dbReference type="KEGG" id="lpl:lp_0609"/>
<dbReference type="PATRIC" id="fig|220668.9.peg.509"/>
<dbReference type="eggNOG" id="COG0008">
    <property type="taxonomic scope" value="Bacteria"/>
</dbReference>
<dbReference type="HOGENOM" id="CLU_015768_6_1_9"/>
<dbReference type="OrthoDB" id="9807503at2"/>
<dbReference type="PhylomeDB" id="Q88YY0"/>
<dbReference type="Proteomes" id="UP000000432">
    <property type="component" value="Chromosome"/>
</dbReference>
<dbReference type="GO" id="GO:0005829">
    <property type="term" value="C:cytosol"/>
    <property type="evidence" value="ECO:0007669"/>
    <property type="project" value="TreeGrafter"/>
</dbReference>
<dbReference type="GO" id="GO:0005524">
    <property type="term" value="F:ATP binding"/>
    <property type="evidence" value="ECO:0007669"/>
    <property type="project" value="UniProtKB-UniRule"/>
</dbReference>
<dbReference type="GO" id="GO:0004818">
    <property type="term" value="F:glutamate-tRNA ligase activity"/>
    <property type="evidence" value="ECO:0007669"/>
    <property type="project" value="UniProtKB-UniRule"/>
</dbReference>
<dbReference type="GO" id="GO:0000049">
    <property type="term" value="F:tRNA binding"/>
    <property type="evidence" value="ECO:0007669"/>
    <property type="project" value="InterPro"/>
</dbReference>
<dbReference type="GO" id="GO:0008270">
    <property type="term" value="F:zinc ion binding"/>
    <property type="evidence" value="ECO:0007669"/>
    <property type="project" value="InterPro"/>
</dbReference>
<dbReference type="GO" id="GO:0006424">
    <property type="term" value="P:glutamyl-tRNA aminoacylation"/>
    <property type="evidence" value="ECO:0007669"/>
    <property type="project" value="UniProtKB-UniRule"/>
</dbReference>
<dbReference type="CDD" id="cd00808">
    <property type="entry name" value="GluRS_core"/>
    <property type="match status" value="1"/>
</dbReference>
<dbReference type="FunFam" id="1.10.10.350:FF:000002">
    <property type="entry name" value="Glutamate--tRNA ligase"/>
    <property type="match status" value="1"/>
</dbReference>
<dbReference type="FunFam" id="3.40.50.620:FF:000007">
    <property type="entry name" value="Glutamate--tRNA ligase"/>
    <property type="match status" value="1"/>
</dbReference>
<dbReference type="Gene3D" id="1.10.10.350">
    <property type="match status" value="1"/>
</dbReference>
<dbReference type="Gene3D" id="3.40.50.620">
    <property type="entry name" value="HUPs"/>
    <property type="match status" value="1"/>
</dbReference>
<dbReference type="HAMAP" id="MF_00022">
    <property type="entry name" value="Glu_tRNA_synth_type1"/>
    <property type="match status" value="1"/>
</dbReference>
<dbReference type="InterPro" id="IPR045462">
    <property type="entry name" value="aa-tRNA-synth_I_cd-bd"/>
</dbReference>
<dbReference type="InterPro" id="IPR020751">
    <property type="entry name" value="aa-tRNA-synth_I_codon-bd_sub2"/>
</dbReference>
<dbReference type="InterPro" id="IPR001412">
    <property type="entry name" value="aa-tRNA-synth_I_CS"/>
</dbReference>
<dbReference type="InterPro" id="IPR008925">
    <property type="entry name" value="aa_tRNA-synth_I_cd-bd_sf"/>
</dbReference>
<dbReference type="InterPro" id="IPR004527">
    <property type="entry name" value="Glu-tRNA-ligase_bac/mito"/>
</dbReference>
<dbReference type="InterPro" id="IPR000924">
    <property type="entry name" value="Glu/Gln-tRNA-synth"/>
</dbReference>
<dbReference type="InterPro" id="IPR020058">
    <property type="entry name" value="Glu/Gln-tRNA-synth_Ib_cat-dom"/>
</dbReference>
<dbReference type="InterPro" id="IPR049940">
    <property type="entry name" value="GluQ/Sye"/>
</dbReference>
<dbReference type="InterPro" id="IPR033910">
    <property type="entry name" value="GluRS_core"/>
</dbReference>
<dbReference type="InterPro" id="IPR014729">
    <property type="entry name" value="Rossmann-like_a/b/a_fold"/>
</dbReference>
<dbReference type="NCBIfam" id="TIGR00464">
    <property type="entry name" value="gltX_bact"/>
    <property type="match status" value="1"/>
</dbReference>
<dbReference type="PANTHER" id="PTHR43311">
    <property type="entry name" value="GLUTAMATE--TRNA LIGASE"/>
    <property type="match status" value="1"/>
</dbReference>
<dbReference type="PANTHER" id="PTHR43311:SF2">
    <property type="entry name" value="GLUTAMATE--TRNA LIGASE, MITOCHONDRIAL-RELATED"/>
    <property type="match status" value="1"/>
</dbReference>
<dbReference type="Pfam" id="PF19269">
    <property type="entry name" value="Anticodon_2"/>
    <property type="match status" value="1"/>
</dbReference>
<dbReference type="Pfam" id="PF00749">
    <property type="entry name" value="tRNA-synt_1c"/>
    <property type="match status" value="1"/>
</dbReference>
<dbReference type="PRINTS" id="PR00987">
    <property type="entry name" value="TRNASYNTHGLU"/>
</dbReference>
<dbReference type="SUPFAM" id="SSF48163">
    <property type="entry name" value="An anticodon-binding domain of class I aminoacyl-tRNA synthetases"/>
    <property type="match status" value="1"/>
</dbReference>
<dbReference type="SUPFAM" id="SSF52374">
    <property type="entry name" value="Nucleotidylyl transferase"/>
    <property type="match status" value="1"/>
</dbReference>
<dbReference type="PROSITE" id="PS00178">
    <property type="entry name" value="AA_TRNA_LIGASE_I"/>
    <property type="match status" value="1"/>
</dbReference>